<feature type="chain" id="PRO_1000044909" description="Putative double-stranded DNA mimic protein NTHI1680">
    <location>
        <begin position="1"/>
        <end position="107"/>
    </location>
</feature>
<sequence length="107" mass="12572">MTTEIKKLDPDTAIDIAYDIFLEMAGENLDPAYILLFNLQFEERGGVEFVETADDWEEEIGVLIDPEEYAEVWVGLVNKQDEMDDVFAKFLISHREEDREFHVIWKK</sequence>
<proteinExistence type="inferred from homology"/>
<protein>
    <recommendedName>
        <fullName evidence="1">Putative double-stranded DNA mimic protein NTHI1680</fullName>
    </recommendedName>
</protein>
<dbReference type="EMBL" id="CP000057">
    <property type="protein sequence ID" value="AAX88470.1"/>
    <property type="molecule type" value="Genomic_DNA"/>
</dbReference>
<dbReference type="RefSeq" id="WP_005687131.1">
    <property type="nucleotide sequence ID" value="NC_007146.2"/>
</dbReference>
<dbReference type="BMRB" id="Q4QKH7"/>
<dbReference type="SMR" id="Q4QKH7"/>
<dbReference type="KEGG" id="hit:NTHI1680"/>
<dbReference type="HOGENOM" id="CLU_143392_0_0_6"/>
<dbReference type="Proteomes" id="UP000002525">
    <property type="component" value="Chromosome"/>
</dbReference>
<dbReference type="Gene3D" id="3.10.450.140">
    <property type="entry name" value="dsDNA mimic, putative"/>
    <property type="match status" value="1"/>
</dbReference>
<dbReference type="HAMAP" id="MF_00680">
    <property type="entry name" value="Put_dsDNA_mimic"/>
    <property type="match status" value="1"/>
</dbReference>
<dbReference type="InterPro" id="IPR007376">
    <property type="entry name" value="dsDNA_mimic_put"/>
</dbReference>
<dbReference type="InterPro" id="IPR036763">
    <property type="entry name" value="Put_dsDNA_mimic_sf"/>
</dbReference>
<dbReference type="NCBIfam" id="NF003469">
    <property type="entry name" value="PRK05094.1"/>
    <property type="match status" value="1"/>
</dbReference>
<dbReference type="Pfam" id="PF04269">
    <property type="entry name" value="DUF440"/>
    <property type="match status" value="1"/>
</dbReference>
<dbReference type="PIRSF" id="PIRSF004916">
    <property type="entry name" value="UCP004916"/>
    <property type="match status" value="1"/>
</dbReference>
<dbReference type="SUPFAM" id="SSF102816">
    <property type="entry name" value="Putative dsDNA mimic"/>
    <property type="match status" value="1"/>
</dbReference>
<comment type="function">
    <text evidence="1">May act as a double-stranded DNA (dsDNA) mimic. Probably regulates the activity of a dsDNA-binding protein.</text>
</comment>
<comment type="similarity">
    <text evidence="1">Belongs to the putative dsDNA mimic protein family.</text>
</comment>
<gene>
    <name type="ordered locus">NTHI1680</name>
</gene>
<reference key="1">
    <citation type="journal article" date="2005" name="J. Bacteriol.">
        <title>Genomic sequence of an otitis media isolate of nontypeable Haemophilus influenzae: comparative study with H. influenzae serotype d, strain KW20.</title>
        <authorList>
            <person name="Harrison A."/>
            <person name="Dyer D.W."/>
            <person name="Gillaspy A."/>
            <person name="Ray W.C."/>
            <person name="Mungur R."/>
            <person name="Carson M.B."/>
            <person name="Zhong H."/>
            <person name="Gipson J."/>
            <person name="Gipson M."/>
            <person name="Johnson L.S."/>
            <person name="Lewis L."/>
            <person name="Bakaletz L.O."/>
            <person name="Munson R.S. Jr."/>
        </authorList>
    </citation>
    <scope>NUCLEOTIDE SEQUENCE [LARGE SCALE GENOMIC DNA]</scope>
    <source>
        <strain>86-028NP</strain>
    </source>
</reference>
<name>Y1680_HAEI8</name>
<evidence type="ECO:0000255" key="1">
    <source>
        <dbReference type="HAMAP-Rule" id="MF_00680"/>
    </source>
</evidence>
<organism>
    <name type="scientific">Haemophilus influenzae (strain 86-028NP)</name>
    <dbReference type="NCBI Taxonomy" id="281310"/>
    <lineage>
        <taxon>Bacteria</taxon>
        <taxon>Pseudomonadati</taxon>
        <taxon>Pseudomonadota</taxon>
        <taxon>Gammaproteobacteria</taxon>
        <taxon>Pasteurellales</taxon>
        <taxon>Pasteurellaceae</taxon>
        <taxon>Haemophilus</taxon>
    </lineage>
</organism>
<accession>Q4QKH7</accession>